<reference key="1">
    <citation type="journal article" date="1998" name="J. Virol.">
        <title>Identification of a novel cellular TPR-containing protein, SGT, that interacts with the nonstructural protein NS1 of parvovirus H-1.</title>
        <authorList>
            <person name="Cziepluch C."/>
            <person name="Kordes E."/>
            <person name="Poirey R."/>
            <person name="Grewenig A."/>
            <person name="Rommelaere J."/>
            <person name="Jauniaux J.-C."/>
        </authorList>
    </citation>
    <scope>NUCLEOTIDE SEQUENCE [MRNA]</scope>
    <scope>INTERACTION WITH PARVOVIRUS NS1 (MICROBIAL INFECTION)</scope>
</reference>
<reference key="2">
    <citation type="journal article" date="2003" name="J. Biol. Chem.">
        <title>A brain-specific isoform of small glutamine-rich tetratricopeptide repeat-containing protein binds to Hsc70 and the cysteine string protein.</title>
        <authorList>
            <person name="Tobaben S."/>
            <person name="Varoqueaux F."/>
            <person name="Brose N."/>
            <person name="Stahl B."/>
            <person name="Meyer G."/>
        </authorList>
    </citation>
    <scope>NUCLEOTIDE SEQUENCE [MRNA]</scope>
    <scope>FUNCTION</scope>
    <scope>SUBUNIT</scope>
    <scope>TISSUE SPECIFICITY</scope>
</reference>
<reference key="3">
    <citation type="journal article" date="2004" name="Genome Res.">
        <title>The status, quality, and expansion of the NIH full-length cDNA project: the Mammalian Gene Collection (MGC).</title>
        <authorList>
            <consortium name="The MGC Project Team"/>
        </authorList>
    </citation>
    <scope>NUCLEOTIDE SEQUENCE [LARGE SCALE MRNA]</scope>
    <source>
        <tissue>Ovary</tissue>
    </source>
</reference>
<reference key="4">
    <citation type="submission" date="2007-04" db="UniProtKB">
        <authorList>
            <person name="Lubec G."/>
            <person name="Chen W.-Q."/>
        </authorList>
    </citation>
    <scope>PROTEIN SEQUENCE OF 104-116 AND 165-174</scope>
    <scope>IDENTIFICATION BY MASS SPECTROMETRY</scope>
    <source>
        <strain>Sprague-Dawley</strain>
        <tissue>Hippocampus</tissue>
    </source>
</reference>
<reference key="5">
    <citation type="journal article" date="2005" name="Arch. Biochem. Biophys.">
        <title>Small glutamine-rich tetratricopeptide repeat-containing protein is composed of three structural units with distinct functions.</title>
        <authorList>
            <person name="Liou S.T."/>
            <person name="Wang C."/>
        </authorList>
    </citation>
    <scope>INTERACTION WITH HSP90AA1 AND HSPA8</scope>
</reference>
<reference key="6">
    <citation type="journal article" date="2006" name="Proc. Natl. Acad. Sci. U.S.A.">
        <title>Quantitative phosphoproteomics of vasopressin-sensitive renal cells: regulation of aquaporin-2 phosphorylation at two sites.</title>
        <authorList>
            <person name="Hoffert J.D."/>
            <person name="Pisitkun T."/>
            <person name="Wang G."/>
            <person name="Shen R.-F."/>
            <person name="Knepper M.A."/>
        </authorList>
    </citation>
    <scope>PHOSPHORYLATION [LARGE SCALE ANALYSIS] AT THR-81</scope>
    <scope>IDENTIFICATION BY MASS SPECTROMETRY [LARGE SCALE ANALYSIS]</scope>
</reference>
<reference key="7">
    <citation type="journal article" date="2012" name="Nat. Commun.">
        <title>Quantitative maps of protein phosphorylation sites across 14 different rat organs and tissues.</title>
        <authorList>
            <person name="Lundby A."/>
            <person name="Secher A."/>
            <person name="Lage K."/>
            <person name="Nordsborg N.B."/>
            <person name="Dmytriyev A."/>
            <person name="Lundby C."/>
            <person name="Olsen J.V."/>
        </authorList>
    </citation>
    <scope>PHOSPHORYLATION [LARGE SCALE ANALYSIS] AT THR-81 AND SER-84</scope>
    <scope>IDENTIFICATION BY MASS SPECTROMETRY [LARGE SCALE ANALYSIS]</scope>
</reference>
<sequence length="314" mass="34157">MDNRKRLAYAIIQFLHGQLRHGGLSSDAQESLEVAIQCLETAFGVTLEDSDLALPQTLPEIFEAATASKEMPQDPRGPDRTPPSEEDSAEAERLKTEGNEQMKLENFEAAVHLYGKAIELNPANAVYFCNRAAAYSKLGNYVGAVQDCERAIGIDPGYSKAYGRMGLALSSLNKHAEAVAYYKKALELDPDNDTYKSNLKIAELKLREAPSPTGGVGSLDIAGLLNNPHFITMASSLMNSPQLQQLMSGMISGGHNPLGTPGSSPQHSDLASLIQAGQQFAQQMQQQNPEFVEQIRSQVVRSRTPSASHEEQQE</sequence>
<evidence type="ECO:0000250" key="1">
    <source>
        <dbReference type="UniProtKB" id="O43765"/>
    </source>
</evidence>
<evidence type="ECO:0000256" key="2">
    <source>
        <dbReference type="SAM" id="MobiDB-lite"/>
    </source>
</evidence>
<evidence type="ECO:0000269" key="3">
    <source>
    </source>
</evidence>
<evidence type="ECO:0000269" key="4">
    <source>
    </source>
</evidence>
<evidence type="ECO:0000269" key="5">
    <source>
    </source>
</evidence>
<evidence type="ECO:0000305" key="6"/>
<evidence type="ECO:0007744" key="7">
    <source>
    </source>
</evidence>
<evidence type="ECO:0007744" key="8">
    <source>
    </source>
</evidence>
<proteinExistence type="evidence at protein level"/>
<protein>
    <recommendedName>
        <fullName>Small glutamine-rich tetratricopeptide repeat-containing protein alpha</fullName>
    </recommendedName>
    <alternativeName>
        <fullName>Alpha-SGT</fullName>
    </alternativeName>
    <alternativeName>
        <fullName>Small glutamine-rich protein with tetratricopeptide repeats 1</fullName>
    </alternativeName>
</protein>
<gene>
    <name type="primary">Sgta</name>
    <name type="synonym">Sgt</name>
    <name type="synonym">Sgt1</name>
    <name type="synonym">Stg</name>
</gene>
<name>SGTA_RAT</name>
<keyword id="KW-0007">Acetylation</keyword>
<keyword id="KW-0143">Chaperone</keyword>
<keyword id="KW-0963">Cytoplasm</keyword>
<keyword id="KW-0903">Direct protein sequencing</keyword>
<keyword id="KW-0539">Nucleus</keyword>
<keyword id="KW-0597">Phosphoprotein</keyword>
<keyword id="KW-1185">Reference proteome</keyword>
<keyword id="KW-0677">Repeat</keyword>
<keyword id="KW-0802">TPR repeat</keyword>
<comment type="function">
    <text evidence="1 3">Co-chaperone that binds misfolded and hydrophobic patches-containing client proteins in the cytosol. Mediates their targeting to the endoplasmic reticulum but also regulates their sorting to the proteasome when targeting fails. Functions in tail-anchored/type II transmembrane proteins membrane insertion constituting with ASNA1 and the BAG6 complex a targeting module. Functions upstream of the BAG6 complex and ASNA1, binding more rapidly the transmembrane domain of newly synthesized proteins. It is also involved in the regulation of the endoplasmic reticulum-associated misfolded protein catabolic process via its interaction with BAG6: collaborates with the BAG6 complex to maintain hydrophobic substrates in non-ubiquitinated states. Competes with RNF126 for interaction with BAG6, preventing the ubiquitination of client proteins associated with the BAG6 complex (By similarity). Binds directly to HSC70 and HSP70 and regulates their ATPase activity (PubMed:12878599).</text>
</comment>
<comment type="subunit">
    <text evidence="1 3 4">Homodimer (By similarity). Homooligomer (PubMed:12878599). Interacts with DNAJC5 and DNAJC5B (By similarity). Interacts (via TPR repeats) with HSP90AA1 (PubMed:15708368). Interacts (via Gln-rich region) with SLC2A1 (By similarity). Interacts with HSP90AB1 (By similarity). Interacts (via TPR repeats) with HSPA8/Hsc70; the interaction is direct (PubMed:15708368). Interacts with BAG6 (via ubiquitin-like domain); interaction prevents interaction between BAG6 and RNF126 (By similarity). Forms a multiprotein complex, at least composed of DNAJB12, DNAJB14, HSPA8/Hsc70 and SGTA; interaction with DNAJB14 and HSPA8/Hsc70 is direct (By similarity).</text>
</comment>
<comment type="subunit">
    <text evidence="5">(Microbial infection) Interacts with NS1 from parvovirus H-1 (PubMed:9557704).</text>
</comment>
<comment type="subcellular location">
    <subcellularLocation>
        <location evidence="1">Cytoplasm</location>
    </subcellularLocation>
    <subcellularLocation>
        <location evidence="1">Nucleus</location>
    </subcellularLocation>
    <text evidence="1">Co-localizes with HSP90AB1 in the cytoplasm. Increased nuclear accumulation seen during cell apoptosis.</text>
</comment>
<comment type="tissue specificity">
    <text evidence="3">Ubiquitously expressed.</text>
</comment>
<comment type="similarity">
    <text evidence="6">Belongs to the SGT family.</text>
</comment>
<feature type="chain" id="PRO_0000106367" description="Small glutamine-rich tetratricopeptide repeat-containing protein alpha">
    <location>
        <begin position="1"/>
        <end position="314"/>
    </location>
</feature>
<feature type="repeat" description="TPR 1">
    <location>
        <begin position="91"/>
        <end position="124"/>
    </location>
</feature>
<feature type="repeat" description="TPR 2">
    <location>
        <begin position="125"/>
        <end position="158"/>
    </location>
</feature>
<feature type="repeat" description="TPR 3">
    <location>
        <begin position="159"/>
        <end position="192"/>
    </location>
</feature>
<feature type="region of interest" description="Disordered" evidence="2">
    <location>
        <begin position="65"/>
        <end position="99"/>
    </location>
</feature>
<feature type="region of interest" description="Disordered" evidence="2">
    <location>
        <begin position="249"/>
        <end position="268"/>
    </location>
</feature>
<feature type="compositionally biased region" description="Basic and acidic residues" evidence="2">
    <location>
        <begin position="71"/>
        <end position="83"/>
    </location>
</feature>
<feature type="compositionally biased region" description="Basic and acidic residues" evidence="2">
    <location>
        <begin position="90"/>
        <end position="99"/>
    </location>
</feature>
<feature type="modified residue" description="Phosphothreonine" evidence="7 8">
    <location>
        <position position="81"/>
    </location>
</feature>
<feature type="modified residue" description="Phosphoserine" evidence="8">
    <location>
        <position position="84"/>
    </location>
</feature>
<feature type="modified residue" description="N6-acetyllysine" evidence="1">
    <location>
        <position position="137"/>
    </location>
</feature>
<feature type="modified residue" description="Phosphoserine" evidence="1">
    <location>
        <position position="302"/>
    </location>
</feature>
<feature type="modified residue" description="Phosphothreonine" evidence="1">
    <location>
        <position position="304"/>
    </location>
</feature>
<feature type="modified residue" description="Phosphoserine" evidence="1">
    <location>
        <position position="306"/>
    </location>
</feature>
<organism>
    <name type="scientific">Rattus norvegicus</name>
    <name type="common">Rat</name>
    <dbReference type="NCBI Taxonomy" id="10116"/>
    <lineage>
        <taxon>Eukaryota</taxon>
        <taxon>Metazoa</taxon>
        <taxon>Chordata</taxon>
        <taxon>Craniata</taxon>
        <taxon>Vertebrata</taxon>
        <taxon>Euteleostomi</taxon>
        <taxon>Mammalia</taxon>
        <taxon>Eutheria</taxon>
        <taxon>Euarchontoglires</taxon>
        <taxon>Glires</taxon>
        <taxon>Rodentia</taxon>
        <taxon>Myomorpha</taxon>
        <taxon>Muroidea</taxon>
        <taxon>Muridae</taxon>
        <taxon>Murinae</taxon>
        <taxon>Rattus</taxon>
    </lineage>
</organism>
<accession>O70593</accession>
<accession>Q548F5</accession>
<dbReference type="EMBL" id="AJ222724">
    <property type="protein sequence ID" value="CAA10960.1"/>
    <property type="molecule type" value="mRNA"/>
</dbReference>
<dbReference type="EMBL" id="AF368278">
    <property type="protein sequence ID" value="AAP29456.1"/>
    <property type="molecule type" value="mRNA"/>
</dbReference>
<dbReference type="EMBL" id="BC087642">
    <property type="protein sequence ID" value="AAH87642.1"/>
    <property type="molecule type" value="mRNA"/>
</dbReference>
<dbReference type="RefSeq" id="NP_073194.1">
    <property type="nucleotide sequence ID" value="NM_022703.3"/>
</dbReference>
<dbReference type="SMR" id="O70593"/>
<dbReference type="BioGRID" id="249184">
    <property type="interactions" value="2"/>
</dbReference>
<dbReference type="FunCoup" id="O70593">
    <property type="interactions" value="3824"/>
</dbReference>
<dbReference type="STRING" id="10116.ENSRNOP00000026960"/>
<dbReference type="GlyGen" id="O70593">
    <property type="glycosylation" value="2 sites"/>
</dbReference>
<dbReference type="iPTMnet" id="O70593"/>
<dbReference type="PhosphoSitePlus" id="O70593"/>
<dbReference type="jPOST" id="O70593"/>
<dbReference type="PaxDb" id="10116-ENSRNOP00000026960"/>
<dbReference type="PeptideAtlas" id="O70593"/>
<dbReference type="GeneID" id="64667"/>
<dbReference type="KEGG" id="rno:64667"/>
<dbReference type="UCSC" id="RGD:620815">
    <property type="organism name" value="rat"/>
</dbReference>
<dbReference type="AGR" id="RGD:620815"/>
<dbReference type="CTD" id="6449"/>
<dbReference type="RGD" id="620815">
    <property type="gene designation" value="Sgta"/>
</dbReference>
<dbReference type="VEuPathDB" id="HostDB:ENSRNOG00000019891"/>
<dbReference type="eggNOG" id="KOG0553">
    <property type="taxonomic scope" value="Eukaryota"/>
</dbReference>
<dbReference type="HOGENOM" id="CLU_044224_0_0_1"/>
<dbReference type="InParanoid" id="O70593"/>
<dbReference type="PhylomeDB" id="O70593"/>
<dbReference type="Reactome" id="R-RNO-9609523">
    <property type="pathway name" value="Insertion of tail-anchored proteins into the endoplasmic reticulum membrane"/>
</dbReference>
<dbReference type="PRO" id="PR:O70593"/>
<dbReference type="Proteomes" id="UP000002494">
    <property type="component" value="Chromosome 7"/>
</dbReference>
<dbReference type="Bgee" id="ENSRNOG00000019891">
    <property type="expression patterns" value="Expressed in skeletal muscle tissue and 19 other cell types or tissues"/>
</dbReference>
<dbReference type="GO" id="GO:0005829">
    <property type="term" value="C:cytosol"/>
    <property type="evidence" value="ECO:0000266"/>
    <property type="project" value="RGD"/>
</dbReference>
<dbReference type="GO" id="GO:0098850">
    <property type="term" value="C:extrinsic component of synaptic vesicle membrane"/>
    <property type="evidence" value="ECO:0000314"/>
    <property type="project" value="SynGO"/>
</dbReference>
<dbReference type="GO" id="GO:0016020">
    <property type="term" value="C:membrane"/>
    <property type="evidence" value="ECO:0000266"/>
    <property type="project" value="RGD"/>
</dbReference>
<dbReference type="GO" id="GO:0005634">
    <property type="term" value="C:nucleus"/>
    <property type="evidence" value="ECO:0000266"/>
    <property type="project" value="RGD"/>
</dbReference>
<dbReference type="GO" id="GO:0098793">
    <property type="term" value="C:presynapse"/>
    <property type="evidence" value="ECO:0000314"/>
    <property type="project" value="SynGO"/>
</dbReference>
<dbReference type="GO" id="GO:0072380">
    <property type="term" value="C:TRC complex"/>
    <property type="evidence" value="ECO:0000318"/>
    <property type="project" value="GO_Central"/>
</dbReference>
<dbReference type="GO" id="GO:1904288">
    <property type="term" value="F:BAT3 complex binding"/>
    <property type="evidence" value="ECO:0000266"/>
    <property type="project" value="RGD"/>
</dbReference>
<dbReference type="GO" id="GO:0042802">
    <property type="term" value="F:identical protein binding"/>
    <property type="evidence" value="ECO:0000314"/>
    <property type="project" value="RGD"/>
</dbReference>
<dbReference type="GO" id="GO:0060090">
    <property type="term" value="F:molecular adaptor activity"/>
    <property type="evidence" value="ECO:0000318"/>
    <property type="project" value="GO_Central"/>
</dbReference>
<dbReference type="GO" id="GO:0061077">
    <property type="term" value="P:chaperone-mediated protein folding"/>
    <property type="evidence" value="ECO:0000314"/>
    <property type="project" value="SynGO"/>
</dbReference>
<dbReference type="GO" id="GO:0036503">
    <property type="term" value="P:ERAD pathway"/>
    <property type="evidence" value="ECO:0000250"/>
    <property type="project" value="UniProtKB"/>
</dbReference>
<dbReference type="GO" id="GO:1904293">
    <property type="term" value="P:negative regulation of ERAD pathway"/>
    <property type="evidence" value="ECO:0000250"/>
    <property type="project" value="UniProtKB"/>
</dbReference>
<dbReference type="GO" id="GO:2000059">
    <property type="term" value="P:negative regulation of ubiquitin-dependent protein catabolic process"/>
    <property type="evidence" value="ECO:0000250"/>
    <property type="project" value="UniProtKB"/>
</dbReference>
<dbReference type="GO" id="GO:1904294">
    <property type="term" value="P:positive regulation of ERAD pathway"/>
    <property type="evidence" value="ECO:0000266"/>
    <property type="project" value="RGD"/>
</dbReference>
<dbReference type="GO" id="GO:2000060">
    <property type="term" value="P:positive regulation of ubiquitin-dependent protein catabolic process"/>
    <property type="evidence" value="ECO:0000266"/>
    <property type="project" value="RGD"/>
</dbReference>
<dbReference type="GO" id="GO:0006620">
    <property type="term" value="P:post-translational protein targeting to endoplasmic reticulum membrane"/>
    <property type="evidence" value="ECO:0000318"/>
    <property type="project" value="GO_Central"/>
</dbReference>
<dbReference type="GO" id="GO:0051291">
    <property type="term" value="P:protein heterooligomerization"/>
    <property type="evidence" value="ECO:0000314"/>
    <property type="project" value="RGD"/>
</dbReference>
<dbReference type="GO" id="GO:0051260">
    <property type="term" value="P:protein homooligomerization"/>
    <property type="evidence" value="ECO:0000314"/>
    <property type="project" value="RGD"/>
</dbReference>
<dbReference type="GO" id="GO:0071816">
    <property type="term" value="P:tail-anchored membrane protein insertion into ER membrane"/>
    <property type="evidence" value="ECO:0000250"/>
    <property type="project" value="UniProtKB"/>
</dbReference>
<dbReference type="FunFam" id="1.20.5.420:FF:000002">
    <property type="entry name" value="Small glutamine-rich tetratricopeptide repeat-containing protein alpha"/>
    <property type="match status" value="1"/>
</dbReference>
<dbReference type="FunFam" id="1.25.40.10:FF:000108">
    <property type="entry name" value="Small glutamine-rich tetratricopeptide repeat-containing protein alpha"/>
    <property type="match status" value="1"/>
</dbReference>
<dbReference type="Gene3D" id="1.20.5.420">
    <property type="entry name" value="Immunoglobulin FC, subunit C"/>
    <property type="match status" value="1"/>
</dbReference>
<dbReference type="Gene3D" id="1.25.40.10">
    <property type="entry name" value="Tetratricopeptide repeat domain"/>
    <property type="match status" value="1"/>
</dbReference>
<dbReference type="InterPro" id="IPR047150">
    <property type="entry name" value="SGT"/>
</dbReference>
<dbReference type="InterPro" id="IPR032374">
    <property type="entry name" value="SGTA_dimer"/>
</dbReference>
<dbReference type="InterPro" id="IPR011990">
    <property type="entry name" value="TPR-like_helical_dom_sf"/>
</dbReference>
<dbReference type="InterPro" id="IPR019734">
    <property type="entry name" value="TPR_rpt"/>
</dbReference>
<dbReference type="PANTHER" id="PTHR45831">
    <property type="entry name" value="LD24721P"/>
    <property type="match status" value="1"/>
</dbReference>
<dbReference type="PANTHER" id="PTHR45831:SF3">
    <property type="entry name" value="SMALL GLUTAMINE-RICH TETRATRICOPEPTIDE REPEAT-CONTAINING PROTEIN ALPHA"/>
    <property type="match status" value="1"/>
</dbReference>
<dbReference type="Pfam" id="PF16546">
    <property type="entry name" value="SGTA_dimer"/>
    <property type="match status" value="1"/>
</dbReference>
<dbReference type="Pfam" id="PF00515">
    <property type="entry name" value="TPR_1"/>
    <property type="match status" value="2"/>
</dbReference>
<dbReference type="Pfam" id="PF13181">
    <property type="entry name" value="TPR_8"/>
    <property type="match status" value="1"/>
</dbReference>
<dbReference type="SMART" id="SM00028">
    <property type="entry name" value="TPR"/>
    <property type="match status" value="3"/>
</dbReference>
<dbReference type="SUPFAM" id="SSF48452">
    <property type="entry name" value="TPR-like"/>
    <property type="match status" value="1"/>
</dbReference>
<dbReference type="PROSITE" id="PS50005">
    <property type="entry name" value="TPR"/>
    <property type="match status" value="3"/>
</dbReference>
<dbReference type="PROSITE" id="PS50293">
    <property type="entry name" value="TPR_REGION"/>
    <property type="match status" value="1"/>
</dbReference>